<name>RSSA_ECOLI</name>
<protein>
    <recommendedName>
        <fullName>NTE family protein RssA</fullName>
    </recommendedName>
</protein>
<comment type="similarity">
    <text evidence="2">Belongs to the NTE family.</text>
</comment>
<comment type="sequence caution" evidence="2">
    <conflict type="erroneous initiation">
        <sequence resource="EMBL-CDS" id="BAA36102"/>
    </conflict>
</comment>
<evidence type="ECO:0000255" key="1">
    <source>
        <dbReference type="PROSITE-ProRule" id="PRU01161"/>
    </source>
</evidence>
<evidence type="ECO:0000305" key="2"/>
<sequence length="301" mass="33067">MRKIKIGLALGSGAARGWSHIGVINALKKVGIEIDIVAGCSIGSLVGAAYACDRLSALEDWVTSFSYWDVLRLMDLSWQRGGLLRGERVFNQYREIMPETEIENCSRRFAAVATNLSTGRELWFTEGDLHLAIRASCSIPGLMAPVAHNGYWLVDGAVVNPIPISLTRALGADIVIAVDLQHDAHLMQQDLLSFNVSEENSENGDSLPWHARLKERLGSITTRRAVTAPTATEIMTTSIQVLENRLKRNRMAGDPPDILIQPVCPQISTLDFHRAHAAIAAGQLAVERKMDELLPLVRTNI</sequence>
<dbReference type="EMBL" id="M64675">
    <property type="status" value="NOT_ANNOTATED_CDS"/>
    <property type="molecule type" value="Unassigned_DNA"/>
</dbReference>
<dbReference type="EMBL" id="U00096">
    <property type="protein sequence ID" value="AAC74316.2"/>
    <property type="molecule type" value="Genomic_DNA"/>
</dbReference>
<dbReference type="EMBL" id="AP009048">
    <property type="protein sequence ID" value="BAA36102.1"/>
    <property type="status" value="ALT_INIT"/>
    <property type="molecule type" value="Genomic_DNA"/>
</dbReference>
<dbReference type="PIR" id="B36871">
    <property type="entry name" value="B36871"/>
</dbReference>
<dbReference type="RefSeq" id="NP_415750.2">
    <property type="nucleotide sequence ID" value="NC_000913.3"/>
</dbReference>
<dbReference type="RefSeq" id="WP_001295622.1">
    <property type="nucleotide sequence ID" value="NZ_SSZK01000031.1"/>
</dbReference>
<dbReference type="SMR" id="P0AFR0"/>
<dbReference type="BioGRID" id="4261927">
    <property type="interactions" value="252"/>
</dbReference>
<dbReference type="DIP" id="DIP-35948N"/>
<dbReference type="FunCoup" id="P0AFR0">
    <property type="interactions" value="75"/>
</dbReference>
<dbReference type="IntAct" id="P0AFR0">
    <property type="interactions" value="1"/>
</dbReference>
<dbReference type="STRING" id="511145.b1234"/>
<dbReference type="jPOST" id="P0AFR0"/>
<dbReference type="PaxDb" id="511145-b1234"/>
<dbReference type="EnsemblBacteria" id="AAC74316">
    <property type="protein sequence ID" value="AAC74316"/>
    <property type="gene ID" value="b1234"/>
</dbReference>
<dbReference type="GeneID" id="93775300"/>
<dbReference type="GeneID" id="945725"/>
<dbReference type="KEGG" id="ecj:JW1222"/>
<dbReference type="KEGG" id="eco:b1234"/>
<dbReference type="KEGG" id="ecoc:C3026_07260"/>
<dbReference type="PATRIC" id="fig|511145.12.peg.1282"/>
<dbReference type="EchoBASE" id="EB2041"/>
<dbReference type="eggNOG" id="COG1752">
    <property type="taxonomic scope" value="Bacteria"/>
</dbReference>
<dbReference type="HOGENOM" id="CLU_047251_2_0_6"/>
<dbReference type="InParanoid" id="P0AFR0"/>
<dbReference type="OrthoDB" id="5290098at2"/>
<dbReference type="PhylomeDB" id="P0AFR0"/>
<dbReference type="BioCyc" id="EcoCyc:EG12120-MONOMER"/>
<dbReference type="PRO" id="PR:P0AFR0"/>
<dbReference type="Proteomes" id="UP000000625">
    <property type="component" value="Chromosome"/>
</dbReference>
<dbReference type="GO" id="GO:0004622">
    <property type="term" value="F:lysophospholipase activity"/>
    <property type="evidence" value="ECO:0007669"/>
    <property type="project" value="InterPro"/>
</dbReference>
<dbReference type="GO" id="GO:0016042">
    <property type="term" value="P:lipid catabolic process"/>
    <property type="evidence" value="ECO:0007669"/>
    <property type="project" value="UniProtKB-KW"/>
</dbReference>
<dbReference type="GO" id="GO:0046470">
    <property type="term" value="P:phosphatidylcholine metabolic process"/>
    <property type="evidence" value="ECO:0007669"/>
    <property type="project" value="InterPro"/>
</dbReference>
<dbReference type="CDD" id="cd07228">
    <property type="entry name" value="Pat_NTE_like_bacteria"/>
    <property type="match status" value="1"/>
</dbReference>
<dbReference type="Gene3D" id="3.40.1090.10">
    <property type="entry name" value="Cytosolic phospholipase A2 catalytic domain"/>
    <property type="match status" value="1"/>
</dbReference>
<dbReference type="InterPro" id="IPR016035">
    <property type="entry name" value="Acyl_Trfase/lysoPLipase"/>
</dbReference>
<dbReference type="InterPro" id="IPR001423">
    <property type="entry name" value="LysoPLipase_patatin_CS"/>
</dbReference>
<dbReference type="InterPro" id="IPR050301">
    <property type="entry name" value="NTE"/>
</dbReference>
<dbReference type="InterPro" id="IPR002641">
    <property type="entry name" value="PNPLA_dom"/>
</dbReference>
<dbReference type="NCBIfam" id="NF007623">
    <property type="entry name" value="PRK10279.1"/>
    <property type="match status" value="1"/>
</dbReference>
<dbReference type="PANTHER" id="PTHR14226">
    <property type="entry name" value="NEUROPATHY TARGET ESTERASE/SWISS CHEESE D.MELANOGASTER"/>
    <property type="match status" value="1"/>
</dbReference>
<dbReference type="PANTHER" id="PTHR14226:SF76">
    <property type="entry name" value="NTE FAMILY PROTEIN RSSA"/>
    <property type="match status" value="1"/>
</dbReference>
<dbReference type="Pfam" id="PF01734">
    <property type="entry name" value="Patatin"/>
    <property type="match status" value="1"/>
</dbReference>
<dbReference type="SUPFAM" id="SSF52151">
    <property type="entry name" value="FabD/lysophospholipase-like"/>
    <property type="match status" value="1"/>
</dbReference>
<dbReference type="PROSITE" id="PS51635">
    <property type="entry name" value="PNPLA"/>
    <property type="match status" value="1"/>
</dbReference>
<dbReference type="PROSITE" id="PS01237">
    <property type="entry name" value="UPF0028"/>
    <property type="match status" value="1"/>
</dbReference>
<gene>
    <name type="primary">rssA</name>
    <name type="synonym">ychK</name>
    <name type="ordered locus">b1234</name>
    <name type="ordered locus">JW1222</name>
</gene>
<accession>P0AFR0</accession>
<accession>P37053</accession>
<accession>P37054</accession>
<reference key="1">
    <citation type="journal article" date="1994" name="J. Bacteriol.">
        <title>Organization and functions of genes in the upstream region of tyrT of Escherichia coli: phenotypes of mutants with partial deletion of a new gene (tgs).</title>
        <authorList>
            <person name="Boesl M."/>
            <person name="Kersten H."/>
        </authorList>
    </citation>
    <scope>NUCLEOTIDE SEQUENCE [GENOMIC DNA]</scope>
    <source>
        <strain>K12</strain>
    </source>
</reference>
<reference key="2">
    <citation type="journal article" date="1996" name="DNA Res.">
        <title>A 570-kb DNA sequence of the Escherichia coli K-12 genome corresponding to the 28.0-40.1 min region on the linkage map.</title>
        <authorList>
            <person name="Aiba H."/>
            <person name="Baba T."/>
            <person name="Fujita K."/>
            <person name="Hayashi K."/>
            <person name="Inada T."/>
            <person name="Isono K."/>
            <person name="Itoh T."/>
            <person name="Kasai H."/>
            <person name="Kashimoto K."/>
            <person name="Kimura S."/>
            <person name="Kitakawa M."/>
            <person name="Kitagawa M."/>
            <person name="Makino K."/>
            <person name="Miki T."/>
            <person name="Mizobuchi K."/>
            <person name="Mori H."/>
            <person name="Mori T."/>
            <person name="Motomura K."/>
            <person name="Nakade S."/>
            <person name="Nakamura Y."/>
            <person name="Nashimoto H."/>
            <person name="Nishio Y."/>
            <person name="Oshima T."/>
            <person name="Saito N."/>
            <person name="Sampei G."/>
            <person name="Seki Y."/>
            <person name="Sivasundaram S."/>
            <person name="Tagami H."/>
            <person name="Takeda J."/>
            <person name="Takemoto K."/>
            <person name="Takeuchi Y."/>
            <person name="Wada C."/>
            <person name="Yamamoto Y."/>
            <person name="Horiuchi T."/>
        </authorList>
    </citation>
    <scope>NUCLEOTIDE SEQUENCE [LARGE SCALE GENOMIC DNA]</scope>
    <source>
        <strain>K12 / W3110 / ATCC 27325 / DSM 5911</strain>
    </source>
</reference>
<reference key="3">
    <citation type="journal article" date="1996" name="DNA Res.">
        <title>A 718-kb DNA sequence of the Escherichia coli K-12 genome corresponding to the 12.7-28.0 min region on the linkage map.</title>
        <authorList>
            <person name="Oshima T."/>
            <person name="Aiba H."/>
            <person name="Baba T."/>
            <person name="Fujita K."/>
            <person name="Hayashi K."/>
            <person name="Honjo A."/>
            <person name="Ikemoto K."/>
            <person name="Inada T."/>
            <person name="Itoh T."/>
            <person name="Kajihara M."/>
            <person name="Kanai K."/>
            <person name="Kashimoto K."/>
            <person name="Kimura S."/>
            <person name="Kitagawa M."/>
            <person name="Makino K."/>
            <person name="Masuda S."/>
            <person name="Miki T."/>
            <person name="Mizobuchi K."/>
            <person name="Mori H."/>
            <person name="Motomura K."/>
            <person name="Nakamura Y."/>
            <person name="Nashimoto H."/>
            <person name="Nishio Y."/>
            <person name="Saito N."/>
            <person name="Sampei G."/>
            <person name="Seki Y."/>
            <person name="Tagami H."/>
            <person name="Takemoto K."/>
            <person name="Wada C."/>
            <person name="Yamamoto Y."/>
            <person name="Yano M."/>
            <person name="Horiuchi T."/>
        </authorList>
    </citation>
    <scope>NUCLEOTIDE SEQUENCE [LARGE SCALE GENOMIC DNA]</scope>
    <source>
        <strain>K12 / W3110 / ATCC 27325 / DSM 5911</strain>
    </source>
</reference>
<reference key="4">
    <citation type="journal article" date="1997" name="Science">
        <title>The complete genome sequence of Escherichia coli K-12.</title>
        <authorList>
            <person name="Blattner F.R."/>
            <person name="Plunkett G. III"/>
            <person name="Bloch C.A."/>
            <person name="Perna N.T."/>
            <person name="Burland V."/>
            <person name="Riley M."/>
            <person name="Collado-Vides J."/>
            <person name="Glasner J.D."/>
            <person name="Rode C.K."/>
            <person name="Mayhew G.F."/>
            <person name="Gregor J."/>
            <person name="Davis N.W."/>
            <person name="Kirkpatrick H.A."/>
            <person name="Goeden M.A."/>
            <person name="Rose D.J."/>
            <person name="Mau B."/>
            <person name="Shao Y."/>
        </authorList>
    </citation>
    <scope>NUCLEOTIDE SEQUENCE [LARGE SCALE GENOMIC DNA]</scope>
    <source>
        <strain>K12 / MG1655 / ATCC 47076</strain>
    </source>
</reference>
<reference key="5">
    <citation type="journal article" date="2006" name="Mol. Syst. Biol.">
        <title>Highly accurate genome sequences of Escherichia coli K-12 strains MG1655 and W3110.</title>
        <authorList>
            <person name="Hayashi K."/>
            <person name="Morooka N."/>
            <person name="Yamamoto Y."/>
            <person name="Fujita K."/>
            <person name="Isono K."/>
            <person name="Choi S."/>
            <person name="Ohtsubo E."/>
            <person name="Baba T."/>
            <person name="Wanner B.L."/>
            <person name="Mori H."/>
            <person name="Horiuchi T."/>
        </authorList>
    </citation>
    <scope>NUCLEOTIDE SEQUENCE [LARGE SCALE GENOMIC DNA]</scope>
    <source>
        <strain>K12 / W3110 / ATCC 27325 / DSM 5911</strain>
    </source>
</reference>
<organism>
    <name type="scientific">Escherichia coli (strain K12)</name>
    <dbReference type="NCBI Taxonomy" id="83333"/>
    <lineage>
        <taxon>Bacteria</taxon>
        <taxon>Pseudomonadati</taxon>
        <taxon>Pseudomonadota</taxon>
        <taxon>Gammaproteobacteria</taxon>
        <taxon>Enterobacterales</taxon>
        <taxon>Enterobacteriaceae</taxon>
        <taxon>Escherichia</taxon>
    </lineage>
</organism>
<proteinExistence type="inferred from homology"/>
<keyword id="KW-0378">Hydrolase</keyword>
<keyword id="KW-0442">Lipid degradation</keyword>
<keyword id="KW-0443">Lipid metabolism</keyword>
<keyword id="KW-1185">Reference proteome</keyword>
<feature type="chain" id="PRO_0000172531" description="NTE family protein RssA">
    <location>
        <begin position="1"/>
        <end position="301"/>
    </location>
</feature>
<feature type="domain" description="PNPLA" evidence="1">
    <location>
        <begin position="8"/>
        <end position="168"/>
    </location>
</feature>
<feature type="short sequence motif" description="GXSXG" evidence="1">
    <location>
        <begin position="39"/>
        <end position="43"/>
    </location>
</feature>
<feature type="short sequence motif" description="DGA/G" evidence="1">
    <location>
        <begin position="155"/>
        <end position="157"/>
    </location>
</feature>
<feature type="active site" description="Nucleophile" evidence="1">
    <location>
        <position position="41"/>
    </location>
</feature>
<feature type="active site" description="Proton acceptor" evidence="1">
    <location>
        <position position="155"/>
    </location>
</feature>